<evidence type="ECO:0000255" key="1">
    <source>
        <dbReference type="HAMAP-Rule" id="MF_01325"/>
    </source>
</evidence>
<evidence type="ECO:0000305" key="2"/>
<comment type="function">
    <text evidence="1">One of the primary rRNA binding proteins, it binds directly near the 3'-end of the 23S rRNA, where it nucleates assembly of the 50S subunit.</text>
</comment>
<comment type="subunit">
    <text evidence="1">Part of the 50S ribosomal subunit. Forms a cluster with proteins L14 and L19.</text>
</comment>
<comment type="PTM">
    <text evidence="1">Methylated by PrmB.</text>
</comment>
<comment type="similarity">
    <text evidence="1">Belongs to the universal ribosomal protein uL3 family.</text>
</comment>
<accession>Q12SV9</accession>
<keyword id="KW-0488">Methylation</keyword>
<keyword id="KW-1185">Reference proteome</keyword>
<keyword id="KW-0687">Ribonucleoprotein</keyword>
<keyword id="KW-0689">Ribosomal protein</keyword>
<keyword id="KW-0694">RNA-binding</keyword>
<keyword id="KW-0699">rRNA-binding</keyword>
<name>RL3_SHEDO</name>
<dbReference type="EMBL" id="CP000302">
    <property type="protein sequence ID" value="ABE53467.1"/>
    <property type="molecule type" value="Genomic_DNA"/>
</dbReference>
<dbReference type="RefSeq" id="WP_011494636.1">
    <property type="nucleotide sequence ID" value="NC_007954.1"/>
</dbReference>
<dbReference type="SMR" id="Q12SV9"/>
<dbReference type="STRING" id="318161.Sden_0170"/>
<dbReference type="KEGG" id="sdn:Sden_0170"/>
<dbReference type="eggNOG" id="COG0087">
    <property type="taxonomic scope" value="Bacteria"/>
</dbReference>
<dbReference type="HOGENOM" id="CLU_044142_4_1_6"/>
<dbReference type="OrthoDB" id="9806135at2"/>
<dbReference type="Proteomes" id="UP000001982">
    <property type="component" value="Chromosome"/>
</dbReference>
<dbReference type="GO" id="GO:0022625">
    <property type="term" value="C:cytosolic large ribosomal subunit"/>
    <property type="evidence" value="ECO:0007669"/>
    <property type="project" value="TreeGrafter"/>
</dbReference>
<dbReference type="GO" id="GO:0019843">
    <property type="term" value="F:rRNA binding"/>
    <property type="evidence" value="ECO:0007669"/>
    <property type="project" value="UniProtKB-UniRule"/>
</dbReference>
<dbReference type="GO" id="GO:0003735">
    <property type="term" value="F:structural constituent of ribosome"/>
    <property type="evidence" value="ECO:0007669"/>
    <property type="project" value="InterPro"/>
</dbReference>
<dbReference type="GO" id="GO:0006412">
    <property type="term" value="P:translation"/>
    <property type="evidence" value="ECO:0007669"/>
    <property type="project" value="UniProtKB-UniRule"/>
</dbReference>
<dbReference type="FunFam" id="2.40.30.10:FF:000004">
    <property type="entry name" value="50S ribosomal protein L3"/>
    <property type="match status" value="1"/>
</dbReference>
<dbReference type="FunFam" id="3.30.160.810:FF:000001">
    <property type="entry name" value="50S ribosomal protein L3"/>
    <property type="match status" value="1"/>
</dbReference>
<dbReference type="Gene3D" id="3.30.160.810">
    <property type="match status" value="1"/>
</dbReference>
<dbReference type="Gene3D" id="2.40.30.10">
    <property type="entry name" value="Translation factors"/>
    <property type="match status" value="1"/>
</dbReference>
<dbReference type="HAMAP" id="MF_01325_B">
    <property type="entry name" value="Ribosomal_uL3_B"/>
    <property type="match status" value="1"/>
</dbReference>
<dbReference type="InterPro" id="IPR000597">
    <property type="entry name" value="Ribosomal_uL3"/>
</dbReference>
<dbReference type="InterPro" id="IPR019927">
    <property type="entry name" value="Ribosomal_uL3_bac/org-type"/>
</dbReference>
<dbReference type="InterPro" id="IPR019926">
    <property type="entry name" value="Ribosomal_uL3_CS"/>
</dbReference>
<dbReference type="InterPro" id="IPR009000">
    <property type="entry name" value="Transl_B-barrel_sf"/>
</dbReference>
<dbReference type="NCBIfam" id="TIGR03625">
    <property type="entry name" value="L3_bact"/>
    <property type="match status" value="1"/>
</dbReference>
<dbReference type="PANTHER" id="PTHR11229">
    <property type="entry name" value="50S RIBOSOMAL PROTEIN L3"/>
    <property type="match status" value="1"/>
</dbReference>
<dbReference type="PANTHER" id="PTHR11229:SF16">
    <property type="entry name" value="LARGE RIBOSOMAL SUBUNIT PROTEIN UL3C"/>
    <property type="match status" value="1"/>
</dbReference>
<dbReference type="Pfam" id="PF00297">
    <property type="entry name" value="Ribosomal_L3"/>
    <property type="match status" value="1"/>
</dbReference>
<dbReference type="SUPFAM" id="SSF50447">
    <property type="entry name" value="Translation proteins"/>
    <property type="match status" value="1"/>
</dbReference>
<dbReference type="PROSITE" id="PS00474">
    <property type="entry name" value="RIBOSOMAL_L3"/>
    <property type="match status" value="1"/>
</dbReference>
<organism>
    <name type="scientific">Shewanella denitrificans (strain OS217 / ATCC BAA-1090 / DSM 15013)</name>
    <dbReference type="NCBI Taxonomy" id="318161"/>
    <lineage>
        <taxon>Bacteria</taxon>
        <taxon>Pseudomonadati</taxon>
        <taxon>Pseudomonadota</taxon>
        <taxon>Gammaproteobacteria</taxon>
        <taxon>Alteromonadales</taxon>
        <taxon>Shewanellaceae</taxon>
        <taxon>Shewanella</taxon>
    </lineage>
</organism>
<feature type="chain" id="PRO_1000052135" description="Large ribosomal subunit protein uL3">
    <location>
        <begin position="1"/>
        <end position="212"/>
    </location>
</feature>
<feature type="modified residue" description="N5-methylglutamine" evidence="1">
    <location>
        <position position="153"/>
    </location>
</feature>
<protein>
    <recommendedName>
        <fullName evidence="1">Large ribosomal subunit protein uL3</fullName>
    </recommendedName>
    <alternativeName>
        <fullName evidence="2">50S ribosomal protein L3</fullName>
    </alternativeName>
</protein>
<reference key="1">
    <citation type="submission" date="2006-03" db="EMBL/GenBank/DDBJ databases">
        <title>Complete sequence of Shewanella denitrificans OS217.</title>
        <authorList>
            <consortium name="US DOE Joint Genome Institute"/>
            <person name="Copeland A."/>
            <person name="Lucas S."/>
            <person name="Lapidus A."/>
            <person name="Barry K."/>
            <person name="Detter J.C."/>
            <person name="Glavina del Rio T."/>
            <person name="Hammon N."/>
            <person name="Israni S."/>
            <person name="Dalin E."/>
            <person name="Tice H."/>
            <person name="Pitluck S."/>
            <person name="Brettin T."/>
            <person name="Bruce D."/>
            <person name="Han C."/>
            <person name="Tapia R."/>
            <person name="Gilna P."/>
            <person name="Kiss H."/>
            <person name="Schmutz J."/>
            <person name="Larimer F."/>
            <person name="Land M."/>
            <person name="Hauser L."/>
            <person name="Kyrpides N."/>
            <person name="Lykidis A."/>
            <person name="Richardson P."/>
        </authorList>
    </citation>
    <scope>NUCLEOTIDE SEQUENCE [LARGE SCALE GENOMIC DNA]</scope>
    <source>
        <strain>OS217 / ATCC BAA-1090 / DSM 15013</strain>
    </source>
</reference>
<sequence length="212" mass="22590">MAIGLIGRKVGMTRIFTEDGVSIPVTVIEVAGNRVTQVKTLETDGYRALQVTTGTKKANRITKAEAGHFAKGGVEAGRGLWEMRLADGEGEGIEVGAELNVDIFAETVKVDVTGQSKGKGFQGGVKRWNFRTQDMTHGNSLAHRSNGSIGQNQTPGRVFKGKKMSGHMGAEQVTTQNLHVVRVDSERNLILVRGAVPGATNGDLIIKPAVKA</sequence>
<gene>
    <name evidence="1" type="primary">rplC</name>
    <name type="ordered locus">Sden_0170</name>
</gene>
<proteinExistence type="inferred from homology"/>